<proteinExistence type="inferred from homology"/>
<keyword id="KW-0456">Lyase</keyword>
<keyword id="KW-0672">Quinate metabolism</keyword>
<keyword id="KW-1185">Reference proteome</keyword>
<evidence type="ECO:0000255" key="1">
    <source>
        <dbReference type="HAMAP-Rule" id="MF_03136"/>
    </source>
</evidence>
<protein>
    <recommendedName>
        <fullName evidence="1">Catabolic 3-dehydroquinase</fullName>
        <shortName evidence="1">cDHQase</shortName>
        <ecNumber evidence="1">4.2.1.10</ecNumber>
    </recommendedName>
    <alternativeName>
        <fullName evidence="1">3-dehydroquinate dehydratase</fullName>
    </alternativeName>
</protein>
<sequence>MGKSILLINGPNLNLLGTREPHVYGHTTLSDVESNSREIAASHGAVLESFQSNHEGAIVDRIQAARGKVDGIIINPGAYTHTSVAIRDALLSVDVPFIELHVSNVHAREPWRHHSYFSDKAAGIIVGLGVYGYKVAVEHVCVNFEEKEKGAKAAL</sequence>
<accession>B6H4C6</accession>
<dbReference type="EC" id="4.2.1.10" evidence="1"/>
<dbReference type="EMBL" id="AM920428">
    <property type="protein sequence ID" value="CAP91912.1"/>
    <property type="molecule type" value="Genomic_DNA"/>
</dbReference>
<dbReference type="RefSeq" id="XP_002559268.1">
    <property type="nucleotide sequence ID" value="XM_002559222.1"/>
</dbReference>
<dbReference type="SMR" id="B6H4C6"/>
<dbReference type="STRING" id="500485.B6H4C6"/>
<dbReference type="GeneID" id="8311579"/>
<dbReference type="KEGG" id="pcs:N7525_003328"/>
<dbReference type="VEuPathDB" id="FungiDB:PCH_Pc13g08430"/>
<dbReference type="eggNOG" id="ENOG502S1A9">
    <property type="taxonomic scope" value="Eukaryota"/>
</dbReference>
<dbReference type="HOGENOM" id="CLU_090968_1_0_1"/>
<dbReference type="OMA" id="WIHEAGR"/>
<dbReference type="OrthoDB" id="8191625at2759"/>
<dbReference type="BioCyc" id="PCHR:PC13G08430-MONOMER"/>
<dbReference type="UniPathway" id="UPA00088">
    <property type="reaction ID" value="UER00178"/>
</dbReference>
<dbReference type="Proteomes" id="UP000000724">
    <property type="component" value="Contig Pc00c13"/>
</dbReference>
<dbReference type="GO" id="GO:0003855">
    <property type="term" value="F:3-dehydroquinate dehydratase activity"/>
    <property type="evidence" value="ECO:0007669"/>
    <property type="project" value="UniProtKB-UniRule"/>
</dbReference>
<dbReference type="GO" id="GO:0046279">
    <property type="term" value="P:3,4-dihydroxybenzoate biosynthetic process"/>
    <property type="evidence" value="ECO:0007669"/>
    <property type="project" value="UniProtKB-UniRule"/>
</dbReference>
<dbReference type="GO" id="GO:0019631">
    <property type="term" value="P:quinate catabolic process"/>
    <property type="evidence" value="ECO:0007669"/>
    <property type="project" value="TreeGrafter"/>
</dbReference>
<dbReference type="CDD" id="cd00466">
    <property type="entry name" value="DHQase_II"/>
    <property type="match status" value="1"/>
</dbReference>
<dbReference type="Gene3D" id="3.40.50.9100">
    <property type="entry name" value="Dehydroquinase, class II"/>
    <property type="match status" value="1"/>
</dbReference>
<dbReference type="HAMAP" id="MF_00169">
    <property type="entry name" value="AroQ"/>
    <property type="match status" value="1"/>
</dbReference>
<dbReference type="InterPro" id="IPR001874">
    <property type="entry name" value="DHquinase_II"/>
</dbReference>
<dbReference type="InterPro" id="IPR018509">
    <property type="entry name" value="DHquinase_II_CS"/>
</dbReference>
<dbReference type="InterPro" id="IPR036441">
    <property type="entry name" value="DHquinase_II_sf"/>
</dbReference>
<dbReference type="NCBIfam" id="TIGR01088">
    <property type="entry name" value="aroQ"/>
    <property type="match status" value="1"/>
</dbReference>
<dbReference type="NCBIfam" id="NF003804">
    <property type="entry name" value="PRK05395.1-1"/>
    <property type="match status" value="1"/>
</dbReference>
<dbReference type="NCBIfam" id="NF003805">
    <property type="entry name" value="PRK05395.1-2"/>
    <property type="match status" value="1"/>
</dbReference>
<dbReference type="NCBIfam" id="NF003806">
    <property type="entry name" value="PRK05395.1-3"/>
    <property type="match status" value="1"/>
</dbReference>
<dbReference type="NCBIfam" id="NF003807">
    <property type="entry name" value="PRK05395.1-4"/>
    <property type="match status" value="1"/>
</dbReference>
<dbReference type="PANTHER" id="PTHR21272">
    <property type="entry name" value="CATABOLIC 3-DEHYDROQUINASE"/>
    <property type="match status" value="1"/>
</dbReference>
<dbReference type="PANTHER" id="PTHR21272:SF5">
    <property type="entry name" value="CATABOLIC 3-DEHYDROQUINASE"/>
    <property type="match status" value="1"/>
</dbReference>
<dbReference type="Pfam" id="PF01220">
    <property type="entry name" value="DHquinase_II"/>
    <property type="match status" value="1"/>
</dbReference>
<dbReference type="PIRSF" id="PIRSF001399">
    <property type="entry name" value="DHquinase_II"/>
    <property type="match status" value="1"/>
</dbReference>
<dbReference type="SUPFAM" id="SSF52304">
    <property type="entry name" value="Type II 3-dehydroquinate dehydratase"/>
    <property type="match status" value="1"/>
</dbReference>
<dbReference type="PROSITE" id="PS01029">
    <property type="entry name" value="DEHYDROQUINASE_II"/>
    <property type="match status" value="1"/>
</dbReference>
<gene>
    <name evidence="1" type="primary">qutE</name>
    <name type="ORF">Pc13g08430</name>
</gene>
<comment type="function">
    <text evidence="1">Is involved in the catabolism of quinate. Allows the utilization of quinate as carbon source via the beta-ketoadipate pathway.</text>
</comment>
<comment type="catalytic activity">
    <reaction evidence="1">
        <text>3-dehydroquinate = 3-dehydroshikimate + H2O</text>
        <dbReference type="Rhea" id="RHEA:21096"/>
        <dbReference type="ChEBI" id="CHEBI:15377"/>
        <dbReference type="ChEBI" id="CHEBI:16630"/>
        <dbReference type="ChEBI" id="CHEBI:32364"/>
        <dbReference type="EC" id="4.2.1.10"/>
    </reaction>
</comment>
<comment type="pathway">
    <text evidence="1">Aromatic compound metabolism; 3,4-dihydroxybenzoate biosynthesis; 3,4-dihydroxybenzoate from 3-dehydroquinate: step 1/2.</text>
</comment>
<comment type="subunit">
    <text evidence="1">Homododecamer. Adopts a ring-like structure, composed of an arrangement of two hexameric rings stacked on top of one another.</text>
</comment>
<comment type="similarity">
    <text evidence="1">Belongs to the type-II 3-dehydroquinase family.</text>
</comment>
<organism>
    <name type="scientific">Penicillium rubens (strain ATCC 28089 / DSM 1075 / NRRL 1951 / Wisconsin 54-1255)</name>
    <name type="common">Penicillium chrysogenum</name>
    <dbReference type="NCBI Taxonomy" id="500485"/>
    <lineage>
        <taxon>Eukaryota</taxon>
        <taxon>Fungi</taxon>
        <taxon>Dikarya</taxon>
        <taxon>Ascomycota</taxon>
        <taxon>Pezizomycotina</taxon>
        <taxon>Eurotiomycetes</taxon>
        <taxon>Eurotiomycetidae</taxon>
        <taxon>Eurotiales</taxon>
        <taxon>Aspergillaceae</taxon>
        <taxon>Penicillium</taxon>
        <taxon>Penicillium chrysogenum species complex</taxon>
    </lineage>
</organism>
<name>3DHQ_PENRW</name>
<feature type="chain" id="PRO_0000402371" description="Catabolic 3-dehydroquinase">
    <location>
        <begin position="1"/>
        <end position="155"/>
    </location>
</feature>
<feature type="active site" description="Proton acceptor" evidence="1">
    <location>
        <position position="24"/>
    </location>
</feature>
<feature type="active site" description="Proton donor" evidence="1">
    <location>
        <position position="101"/>
    </location>
</feature>
<feature type="binding site" evidence="1">
    <location>
        <position position="75"/>
    </location>
    <ligand>
        <name>substrate</name>
    </ligand>
</feature>
<feature type="binding site" evidence="1">
    <location>
        <position position="81"/>
    </location>
    <ligand>
        <name>substrate</name>
    </ligand>
</feature>
<feature type="binding site" evidence="1">
    <location>
        <position position="88"/>
    </location>
    <ligand>
        <name>substrate</name>
    </ligand>
</feature>
<feature type="binding site" evidence="1">
    <location>
        <begin position="102"/>
        <end position="103"/>
    </location>
    <ligand>
        <name>substrate</name>
    </ligand>
</feature>
<feature type="binding site" evidence="1">
    <location>
        <position position="112"/>
    </location>
    <ligand>
        <name>substrate</name>
    </ligand>
</feature>
<feature type="site" description="Transition state stabilizer" evidence="1">
    <location>
        <position position="19"/>
    </location>
</feature>
<reference key="1">
    <citation type="journal article" date="2008" name="Nat. Biotechnol.">
        <title>Genome sequencing and analysis of the filamentous fungus Penicillium chrysogenum.</title>
        <authorList>
            <person name="van den Berg M.A."/>
            <person name="Albang R."/>
            <person name="Albermann K."/>
            <person name="Badger J.H."/>
            <person name="Daran J.-M."/>
            <person name="Driessen A.J.M."/>
            <person name="Garcia-Estrada C."/>
            <person name="Fedorova N.D."/>
            <person name="Harris D.M."/>
            <person name="Heijne W.H.M."/>
            <person name="Joardar V.S."/>
            <person name="Kiel J.A.K.W."/>
            <person name="Kovalchuk A."/>
            <person name="Martin J.F."/>
            <person name="Nierman W.C."/>
            <person name="Nijland J.G."/>
            <person name="Pronk J.T."/>
            <person name="Roubos J.A."/>
            <person name="van der Klei I.J."/>
            <person name="van Peij N.N.M.E."/>
            <person name="Veenhuis M."/>
            <person name="von Doehren H."/>
            <person name="Wagner C."/>
            <person name="Wortman J.R."/>
            <person name="Bovenberg R.A.L."/>
        </authorList>
    </citation>
    <scope>NUCLEOTIDE SEQUENCE [LARGE SCALE GENOMIC DNA]</scope>
    <source>
        <strain>ATCC 28089 / DSM 1075 / NRRL 1951 / Wisconsin 54-1255</strain>
    </source>
</reference>